<accession>Q04LU1</accession>
<protein>
    <recommendedName>
        <fullName evidence="1">Phenylalanine--tRNA ligase alpha subunit</fullName>
        <ecNumber evidence="1">6.1.1.20</ecNumber>
    </recommendedName>
    <alternativeName>
        <fullName evidence="1">Phenylalanyl-tRNA synthetase alpha subunit</fullName>
        <shortName evidence="1">PheRS</shortName>
    </alternativeName>
</protein>
<feature type="chain" id="PRO_1000006908" description="Phenylalanine--tRNA ligase alpha subunit">
    <location>
        <begin position="1"/>
        <end position="348"/>
    </location>
</feature>
<feature type="binding site" evidence="1">
    <location>
        <position position="262"/>
    </location>
    <ligand>
        <name>Mg(2+)</name>
        <dbReference type="ChEBI" id="CHEBI:18420"/>
        <note>shared with beta subunit</note>
    </ligand>
</feature>
<organism>
    <name type="scientific">Streptococcus pneumoniae serotype 2 (strain D39 / NCTC 7466)</name>
    <dbReference type="NCBI Taxonomy" id="373153"/>
    <lineage>
        <taxon>Bacteria</taxon>
        <taxon>Bacillati</taxon>
        <taxon>Bacillota</taxon>
        <taxon>Bacilli</taxon>
        <taxon>Lactobacillales</taxon>
        <taxon>Streptococcaceae</taxon>
        <taxon>Streptococcus</taxon>
    </lineage>
</organism>
<sequence>MSTIEEQLKALREETLTSLKQITAGNEKEMQDLRVSVLGKKGSLTEILKGMKDVSAEMRPIIGKHVNEARDVLTAAFEETAKLLEEKKVAAQLASESIDVTLPGRPVATGHRHVLTQTSEEIEDIFIGMGYQVVDGFEVEQDYYNFERMNLPKDHPARDMQDTFYITEEILLRTHTSPVQARAMDAHDFSKGPLKMISPGRVFRRDTDDATHSHQFHQIEGLVVGKNISMADLQGTLQLIVQKMFGEERQIRLRPSYFPFTEPSVEVDVSCFKCGGEGCNVCKKTGWIEIMGAGMVHPRVLEMSGIDATVYSGFAFGLGQERVAMLRYGINDIRGFYQGDVRFSEQFK</sequence>
<reference key="1">
    <citation type="journal article" date="2007" name="J. Bacteriol.">
        <title>Genome sequence of Avery's virulent serotype 2 strain D39 of Streptococcus pneumoniae and comparison with that of unencapsulated laboratory strain R6.</title>
        <authorList>
            <person name="Lanie J.A."/>
            <person name="Ng W.-L."/>
            <person name="Kazmierczak K.M."/>
            <person name="Andrzejewski T.M."/>
            <person name="Davidsen T.M."/>
            <person name="Wayne K.J."/>
            <person name="Tettelin H."/>
            <person name="Glass J.I."/>
            <person name="Winkler M.E."/>
        </authorList>
    </citation>
    <scope>NUCLEOTIDE SEQUENCE [LARGE SCALE GENOMIC DNA]</scope>
    <source>
        <strain>D39 / NCTC 7466</strain>
    </source>
</reference>
<name>SYFA_STRP2</name>
<keyword id="KW-0030">Aminoacyl-tRNA synthetase</keyword>
<keyword id="KW-0067">ATP-binding</keyword>
<keyword id="KW-0963">Cytoplasm</keyword>
<keyword id="KW-0436">Ligase</keyword>
<keyword id="KW-0460">Magnesium</keyword>
<keyword id="KW-0479">Metal-binding</keyword>
<keyword id="KW-0547">Nucleotide-binding</keyword>
<keyword id="KW-0648">Protein biosynthesis</keyword>
<keyword id="KW-1185">Reference proteome</keyword>
<proteinExistence type="inferred from homology"/>
<dbReference type="EC" id="6.1.1.20" evidence="1"/>
<dbReference type="EMBL" id="CP000410">
    <property type="protein sequence ID" value="ABJ55158.1"/>
    <property type="molecule type" value="Genomic_DNA"/>
</dbReference>
<dbReference type="RefSeq" id="WP_001813261.1">
    <property type="nucleotide sequence ID" value="NZ_JAMLJR010000001.1"/>
</dbReference>
<dbReference type="SMR" id="Q04LU1"/>
<dbReference type="PaxDb" id="373153-SPD_0504"/>
<dbReference type="GeneID" id="45654008"/>
<dbReference type="KEGG" id="spd:SPD_0504"/>
<dbReference type="eggNOG" id="COG0016">
    <property type="taxonomic scope" value="Bacteria"/>
</dbReference>
<dbReference type="HOGENOM" id="CLU_025086_0_1_9"/>
<dbReference type="BioCyc" id="SPNE373153:G1G6V-556-MONOMER"/>
<dbReference type="Proteomes" id="UP000001452">
    <property type="component" value="Chromosome"/>
</dbReference>
<dbReference type="GO" id="GO:0005737">
    <property type="term" value="C:cytoplasm"/>
    <property type="evidence" value="ECO:0007669"/>
    <property type="project" value="UniProtKB-SubCell"/>
</dbReference>
<dbReference type="GO" id="GO:0005524">
    <property type="term" value="F:ATP binding"/>
    <property type="evidence" value="ECO:0007669"/>
    <property type="project" value="UniProtKB-UniRule"/>
</dbReference>
<dbReference type="GO" id="GO:0140096">
    <property type="term" value="F:catalytic activity, acting on a protein"/>
    <property type="evidence" value="ECO:0007669"/>
    <property type="project" value="UniProtKB-ARBA"/>
</dbReference>
<dbReference type="GO" id="GO:0000287">
    <property type="term" value="F:magnesium ion binding"/>
    <property type="evidence" value="ECO:0007669"/>
    <property type="project" value="UniProtKB-UniRule"/>
</dbReference>
<dbReference type="GO" id="GO:0004826">
    <property type="term" value="F:phenylalanine-tRNA ligase activity"/>
    <property type="evidence" value="ECO:0007669"/>
    <property type="project" value="UniProtKB-UniRule"/>
</dbReference>
<dbReference type="GO" id="GO:0016740">
    <property type="term" value="F:transferase activity"/>
    <property type="evidence" value="ECO:0007669"/>
    <property type="project" value="UniProtKB-ARBA"/>
</dbReference>
<dbReference type="GO" id="GO:0000049">
    <property type="term" value="F:tRNA binding"/>
    <property type="evidence" value="ECO:0007669"/>
    <property type="project" value="InterPro"/>
</dbReference>
<dbReference type="GO" id="GO:0006432">
    <property type="term" value="P:phenylalanyl-tRNA aminoacylation"/>
    <property type="evidence" value="ECO:0007669"/>
    <property type="project" value="UniProtKB-UniRule"/>
</dbReference>
<dbReference type="CDD" id="cd00496">
    <property type="entry name" value="PheRS_alpha_core"/>
    <property type="match status" value="1"/>
</dbReference>
<dbReference type="FunFam" id="3.30.930.10:FF:000003">
    <property type="entry name" value="Phenylalanine--tRNA ligase alpha subunit"/>
    <property type="match status" value="1"/>
</dbReference>
<dbReference type="Gene3D" id="3.30.930.10">
    <property type="entry name" value="Bira Bifunctional Protein, Domain 2"/>
    <property type="match status" value="1"/>
</dbReference>
<dbReference type="HAMAP" id="MF_00281">
    <property type="entry name" value="Phe_tRNA_synth_alpha1"/>
    <property type="match status" value="1"/>
</dbReference>
<dbReference type="InterPro" id="IPR006195">
    <property type="entry name" value="aa-tRNA-synth_II"/>
</dbReference>
<dbReference type="InterPro" id="IPR045864">
    <property type="entry name" value="aa-tRNA-synth_II/BPL/LPL"/>
</dbReference>
<dbReference type="InterPro" id="IPR004529">
    <property type="entry name" value="Phe-tRNA-synth_IIc_asu"/>
</dbReference>
<dbReference type="InterPro" id="IPR004188">
    <property type="entry name" value="Phe-tRNA_ligase_II_N"/>
</dbReference>
<dbReference type="InterPro" id="IPR022911">
    <property type="entry name" value="Phe_tRNA_ligase_alpha1_bac"/>
</dbReference>
<dbReference type="InterPro" id="IPR002319">
    <property type="entry name" value="Phenylalanyl-tRNA_Synthase"/>
</dbReference>
<dbReference type="InterPro" id="IPR010978">
    <property type="entry name" value="tRNA-bd_arm"/>
</dbReference>
<dbReference type="NCBIfam" id="TIGR00468">
    <property type="entry name" value="pheS"/>
    <property type="match status" value="1"/>
</dbReference>
<dbReference type="PANTHER" id="PTHR11538:SF41">
    <property type="entry name" value="PHENYLALANINE--TRNA LIGASE, MITOCHONDRIAL"/>
    <property type="match status" value="1"/>
</dbReference>
<dbReference type="PANTHER" id="PTHR11538">
    <property type="entry name" value="PHENYLALANYL-TRNA SYNTHETASE"/>
    <property type="match status" value="1"/>
</dbReference>
<dbReference type="Pfam" id="PF02912">
    <property type="entry name" value="Phe_tRNA-synt_N"/>
    <property type="match status" value="1"/>
</dbReference>
<dbReference type="Pfam" id="PF01409">
    <property type="entry name" value="tRNA-synt_2d"/>
    <property type="match status" value="1"/>
</dbReference>
<dbReference type="SUPFAM" id="SSF55681">
    <property type="entry name" value="Class II aaRS and biotin synthetases"/>
    <property type="match status" value="1"/>
</dbReference>
<dbReference type="SUPFAM" id="SSF46589">
    <property type="entry name" value="tRNA-binding arm"/>
    <property type="match status" value="1"/>
</dbReference>
<dbReference type="PROSITE" id="PS50862">
    <property type="entry name" value="AA_TRNA_LIGASE_II"/>
    <property type="match status" value="1"/>
</dbReference>
<comment type="catalytic activity">
    <reaction evidence="1">
        <text>tRNA(Phe) + L-phenylalanine + ATP = L-phenylalanyl-tRNA(Phe) + AMP + diphosphate + H(+)</text>
        <dbReference type="Rhea" id="RHEA:19413"/>
        <dbReference type="Rhea" id="RHEA-COMP:9668"/>
        <dbReference type="Rhea" id="RHEA-COMP:9699"/>
        <dbReference type="ChEBI" id="CHEBI:15378"/>
        <dbReference type="ChEBI" id="CHEBI:30616"/>
        <dbReference type="ChEBI" id="CHEBI:33019"/>
        <dbReference type="ChEBI" id="CHEBI:58095"/>
        <dbReference type="ChEBI" id="CHEBI:78442"/>
        <dbReference type="ChEBI" id="CHEBI:78531"/>
        <dbReference type="ChEBI" id="CHEBI:456215"/>
        <dbReference type="EC" id="6.1.1.20"/>
    </reaction>
</comment>
<comment type="cofactor">
    <cofactor evidence="1">
        <name>Mg(2+)</name>
        <dbReference type="ChEBI" id="CHEBI:18420"/>
    </cofactor>
    <text evidence="1">Binds 2 magnesium ions per tetramer.</text>
</comment>
<comment type="subunit">
    <text evidence="1">Tetramer of two alpha and two beta subunits.</text>
</comment>
<comment type="subcellular location">
    <subcellularLocation>
        <location evidence="1">Cytoplasm</location>
    </subcellularLocation>
</comment>
<comment type="similarity">
    <text evidence="1">Belongs to the class-II aminoacyl-tRNA synthetase family. Phe-tRNA synthetase alpha subunit type 1 subfamily.</text>
</comment>
<evidence type="ECO:0000255" key="1">
    <source>
        <dbReference type="HAMAP-Rule" id="MF_00281"/>
    </source>
</evidence>
<gene>
    <name evidence="1" type="primary">pheS</name>
    <name type="ordered locus">SPD_0504</name>
</gene>